<evidence type="ECO:0000255" key="1">
    <source>
        <dbReference type="PROSITE-ProRule" id="PRU00042"/>
    </source>
</evidence>
<evidence type="ECO:0000305" key="2"/>
<protein>
    <recommendedName>
        <fullName>Gastrula zinc finger protein xLCGF3.1</fullName>
    </recommendedName>
</protein>
<organism>
    <name type="scientific">Xenopus laevis</name>
    <name type="common">African clawed frog</name>
    <dbReference type="NCBI Taxonomy" id="8355"/>
    <lineage>
        <taxon>Eukaryota</taxon>
        <taxon>Metazoa</taxon>
        <taxon>Chordata</taxon>
        <taxon>Craniata</taxon>
        <taxon>Vertebrata</taxon>
        <taxon>Euteleostomi</taxon>
        <taxon>Amphibia</taxon>
        <taxon>Batrachia</taxon>
        <taxon>Anura</taxon>
        <taxon>Pipoidea</taxon>
        <taxon>Pipidae</taxon>
        <taxon>Xenopodinae</taxon>
        <taxon>Xenopus</taxon>
        <taxon>Xenopus</taxon>
    </lineage>
</organism>
<comment type="function">
    <text>May be involved in transcriptional regulation.</text>
</comment>
<comment type="subcellular location">
    <subcellularLocation>
        <location evidence="2">Nucleus</location>
    </subcellularLocation>
</comment>
<comment type="similarity">
    <text evidence="2">Belongs to the krueppel C2H2-type zinc-finger protein family.</text>
</comment>
<proteinExistence type="inferred from homology"/>
<sequence length="196" mass="22378">TGEKPFMCTKCGKCLSTKQKLNLHHMTHTGEKPFTCTECGKGFSRNDYLKIHQTIHTGEKPFTCIECGKGFSINRTLKLHYMTHTGEKPFTCTECSKGFSTKRDLEIHQTMHTGEKPLTCTECSKGFSTKHKLSIHQRVHTGEKPFTCTECNKGFSRNDHLQIHQTVHTGEKPFTCTECSKCFSRKELLKIHQIVH</sequence>
<name>ZG3_XENLA</name>
<keyword id="KW-0238">DNA-binding</keyword>
<keyword id="KW-0479">Metal-binding</keyword>
<keyword id="KW-0539">Nucleus</keyword>
<keyword id="KW-1185">Reference proteome</keyword>
<keyword id="KW-0677">Repeat</keyword>
<keyword id="KW-0862">Zinc</keyword>
<keyword id="KW-0863">Zinc-finger</keyword>
<feature type="chain" id="PRO_0000047781" description="Gastrula zinc finger protein xLCGF3.1">
    <location>
        <begin position="1" status="less than"/>
        <end position="196" status="greater than"/>
    </location>
</feature>
<feature type="zinc finger region" description="C2H2-type 1" evidence="1">
    <location>
        <begin position="6"/>
        <end position="28"/>
    </location>
</feature>
<feature type="zinc finger region" description="C2H2-type 2" evidence="1">
    <location>
        <begin position="34"/>
        <end position="56"/>
    </location>
</feature>
<feature type="zinc finger region" description="C2H2-type 3" evidence="1">
    <location>
        <begin position="62"/>
        <end position="84"/>
    </location>
</feature>
<feature type="zinc finger region" description="C2H2-type 4" evidence="1">
    <location>
        <begin position="90"/>
        <end position="112"/>
    </location>
</feature>
<feature type="zinc finger region" description="C2H2-type 5" evidence="1">
    <location>
        <begin position="118"/>
        <end position="140"/>
    </location>
</feature>
<feature type="zinc finger region" description="C2H2-type 6" evidence="1">
    <location>
        <begin position="146"/>
        <end position="168"/>
    </location>
</feature>
<feature type="zinc finger region" description="C2H2-type 7" evidence="1">
    <location>
        <begin position="174"/>
        <end position="196"/>
    </location>
</feature>
<feature type="non-terminal residue">
    <location>
        <position position="1"/>
    </location>
</feature>
<feature type="non-terminal residue">
    <location>
        <position position="196"/>
    </location>
</feature>
<reference key="1">
    <citation type="journal article" date="1989" name="J. Mol. Biol.">
        <title>Second-order repeats in Xenopus laevis finger proteins.</title>
        <authorList>
            <person name="Nietfeld W."/>
            <person name="El-Baradi T."/>
            <person name="Mentzel H."/>
            <person name="Pieler T."/>
            <person name="Koester M."/>
            <person name="Poeting A."/>
            <person name="Knoechel W."/>
        </authorList>
    </citation>
    <scope>NUCLEOTIDE SEQUENCE</scope>
</reference>
<dbReference type="PIR" id="S06558">
    <property type="entry name" value="S06558"/>
</dbReference>
<dbReference type="SMR" id="P18718"/>
<dbReference type="Proteomes" id="UP000186698">
    <property type="component" value="Unplaced"/>
</dbReference>
<dbReference type="GO" id="GO:0005634">
    <property type="term" value="C:nucleus"/>
    <property type="evidence" value="ECO:0007669"/>
    <property type="project" value="UniProtKB-SubCell"/>
</dbReference>
<dbReference type="GO" id="GO:0000981">
    <property type="term" value="F:DNA-binding transcription factor activity, RNA polymerase II-specific"/>
    <property type="evidence" value="ECO:0000318"/>
    <property type="project" value="GO_Central"/>
</dbReference>
<dbReference type="GO" id="GO:0000978">
    <property type="term" value="F:RNA polymerase II cis-regulatory region sequence-specific DNA binding"/>
    <property type="evidence" value="ECO:0000318"/>
    <property type="project" value="GO_Central"/>
</dbReference>
<dbReference type="GO" id="GO:0008270">
    <property type="term" value="F:zinc ion binding"/>
    <property type="evidence" value="ECO:0007669"/>
    <property type="project" value="UniProtKB-KW"/>
</dbReference>
<dbReference type="GO" id="GO:0006357">
    <property type="term" value="P:regulation of transcription by RNA polymerase II"/>
    <property type="evidence" value="ECO:0000318"/>
    <property type="project" value="GO_Central"/>
</dbReference>
<dbReference type="FunFam" id="3.30.160.60:FF:001430">
    <property type="entry name" value="Uncharacterized protein"/>
    <property type="match status" value="1"/>
</dbReference>
<dbReference type="FunFam" id="3.30.160.60:FF:001298">
    <property type="entry name" value="zinc finger protein 23 isoform X1"/>
    <property type="match status" value="1"/>
</dbReference>
<dbReference type="FunFam" id="3.30.160.60:FF:002343">
    <property type="entry name" value="Zinc finger protein 33A"/>
    <property type="match status" value="1"/>
</dbReference>
<dbReference type="FunFam" id="3.30.160.60:FF:000663">
    <property type="entry name" value="Zinc finger protein 45"/>
    <property type="match status" value="1"/>
</dbReference>
<dbReference type="FunFam" id="3.30.160.60:FF:001465">
    <property type="entry name" value="Zinc finger protein 560"/>
    <property type="match status" value="1"/>
</dbReference>
<dbReference type="FunFam" id="3.30.160.60:FF:000912">
    <property type="entry name" value="Zinc finger protein 660"/>
    <property type="match status" value="1"/>
</dbReference>
<dbReference type="FunFam" id="3.30.160.60:FF:000624">
    <property type="entry name" value="zinc finger protein 697"/>
    <property type="match status" value="1"/>
</dbReference>
<dbReference type="Gene3D" id="3.30.160.60">
    <property type="entry name" value="Classic Zinc Finger"/>
    <property type="match status" value="7"/>
</dbReference>
<dbReference type="InterPro" id="IPR036236">
    <property type="entry name" value="Znf_C2H2_sf"/>
</dbReference>
<dbReference type="InterPro" id="IPR013087">
    <property type="entry name" value="Znf_C2H2_type"/>
</dbReference>
<dbReference type="PANTHER" id="PTHR23226">
    <property type="entry name" value="ZINC FINGER AND SCAN DOMAIN-CONTAINING"/>
    <property type="match status" value="1"/>
</dbReference>
<dbReference type="PANTHER" id="PTHR23226:SF377">
    <property type="entry name" value="ZINC FINGER AND SCAN DOMAIN-CONTAINING PROTEIN 20"/>
    <property type="match status" value="1"/>
</dbReference>
<dbReference type="Pfam" id="PF00096">
    <property type="entry name" value="zf-C2H2"/>
    <property type="match status" value="7"/>
</dbReference>
<dbReference type="SMART" id="SM00355">
    <property type="entry name" value="ZnF_C2H2"/>
    <property type="match status" value="7"/>
</dbReference>
<dbReference type="SUPFAM" id="SSF57667">
    <property type="entry name" value="beta-beta-alpha zinc fingers"/>
    <property type="match status" value="4"/>
</dbReference>
<dbReference type="PROSITE" id="PS00028">
    <property type="entry name" value="ZINC_FINGER_C2H2_1"/>
    <property type="match status" value="7"/>
</dbReference>
<dbReference type="PROSITE" id="PS50157">
    <property type="entry name" value="ZINC_FINGER_C2H2_2"/>
    <property type="match status" value="7"/>
</dbReference>
<accession>P18718</accession>